<accession>C5VZF1</accession>
<accession>Q4A3W3</accession>
<accession>Q4A3W4</accession>
<accession>Q4A3W5</accession>
<accession>Q4A3W6</accession>
<accession>Q4A3W7</accession>
<accession>Q4A3W8</accession>
<accession>Q4A3W9</accession>
<accession>Q4A3X0</accession>
<accession>Q9F5J9</accession>
<evidence type="ECO:0000250" key="1"/>
<evidence type="ECO:0000305" key="2"/>
<organism>
    <name type="scientific">Streptococcus suis (strain P1/7)</name>
    <dbReference type="NCBI Taxonomy" id="218494"/>
    <lineage>
        <taxon>Bacteria</taxon>
        <taxon>Bacillati</taxon>
        <taxon>Bacillota</taxon>
        <taxon>Bacilli</taxon>
        <taxon>Lactobacillales</taxon>
        <taxon>Streptococcaceae</taxon>
        <taxon>Streptococcus</taxon>
    </lineage>
</organism>
<feature type="chain" id="PRO_0000387985" description="DNA protection during starvation protein">
    <location>
        <begin position="1"/>
        <end position="172"/>
    </location>
</feature>
<feature type="binding site" evidence="1">
    <location>
        <position position="47"/>
    </location>
    <ligand>
        <name>Fe cation</name>
        <dbReference type="ChEBI" id="CHEBI:24875"/>
        <label>1</label>
        <note>ligand shared between two dodecameric partners</note>
    </ligand>
</feature>
<feature type="binding site" description="in other chain" evidence="1">
    <location>
        <position position="74"/>
    </location>
    <ligand>
        <name>Fe cation</name>
        <dbReference type="ChEBI" id="CHEBI:24875"/>
        <label>1</label>
        <note>ligand shared between two dodecameric partners</note>
    </ligand>
</feature>
<feature type="binding site" description="in other chain" evidence="1">
    <location>
        <position position="78"/>
    </location>
    <ligand>
        <name>Fe cation</name>
        <dbReference type="ChEBI" id="CHEBI:24875"/>
        <label>1</label>
        <note>ligand shared between two dodecameric partners</note>
    </ligand>
</feature>
<feature type="binding site" evidence="1">
    <location>
        <position position="78"/>
    </location>
    <ligand>
        <name>Fe cation</name>
        <dbReference type="ChEBI" id="CHEBI:24875"/>
        <label>2</label>
    </ligand>
</feature>
<gene>
    <name type="primary">dps</name>
    <name type="synonym">dpr</name>
    <name type="ordered locus">SSU1500</name>
</gene>
<name>DPS_STRSE</name>
<keyword id="KW-0963">Cytoplasm</keyword>
<keyword id="KW-0408">Iron</keyword>
<keyword id="KW-0409">Iron storage</keyword>
<keyword id="KW-0479">Metal-binding</keyword>
<keyword id="KW-0560">Oxidoreductase</keyword>
<reference key="1">
    <citation type="journal article" date="2005" name="Mol. Microbiol.">
        <title>Dps/Dpr ferritin-like protein: insights into the mechanism of iron incorporation and evidence for a central role in cellular iron homeostasisin Streptococcus suis.</title>
        <authorList>
            <person name="Pulliainen A.T."/>
            <person name="Kauko A."/>
            <person name="Haataja S."/>
            <person name="Papageorgiou A.C."/>
            <person name="Finne J."/>
        </authorList>
    </citation>
    <scope>NUCLEOTIDE SEQUENCE [GENOMIC DNA]</scope>
</reference>
<reference key="2">
    <citation type="journal article" date="2009" name="PLoS ONE">
        <title>Rapid evolution of virulence and drug resistance in the emerging zoonotic pathogen Streptococcus suis.</title>
        <authorList>
            <person name="Holden M.T.G."/>
            <person name="Hauser H."/>
            <person name="Sanders M."/>
            <person name="Ngo T.H."/>
            <person name="Cherevach I."/>
            <person name="Cronin A."/>
            <person name="Goodhead I."/>
            <person name="Mungall K."/>
            <person name="Quail M.A."/>
            <person name="Price C."/>
            <person name="Rabbinowitsch E."/>
            <person name="Sharp S."/>
            <person name="Croucher N.J."/>
            <person name="Chieu T.B."/>
            <person name="Mai N.T.H."/>
            <person name="Diep T.S."/>
            <person name="Chinh N.T."/>
            <person name="Kehoe M."/>
            <person name="Leigh J.A."/>
            <person name="Ward P.N."/>
            <person name="Dowson C.G."/>
            <person name="Whatmore A.M."/>
            <person name="Chanter N."/>
            <person name="Iversen P."/>
            <person name="Gottschalk M."/>
            <person name="Slater J.D."/>
            <person name="Smith H.E."/>
            <person name="Spratt B.G."/>
            <person name="Xu J."/>
            <person name="Ye C."/>
            <person name="Bentley S."/>
            <person name="Barrell B.G."/>
            <person name="Schultsz C."/>
            <person name="Maskell D.J."/>
            <person name="Parkhill J."/>
        </authorList>
    </citation>
    <scope>NUCLEOTIDE SEQUENCE [LARGE SCALE GENOMIC DNA]</scope>
    <source>
        <strain>P1/7</strain>
    </source>
</reference>
<proteinExistence type="inferred from homology"/>
<comment type="function">
    <text evidence="1">Protects DNA from oxidative damage by sequestering intracellular Fe(2+) ion and storing it in the form of Fe(3+) oxyhydroxide mineral. One hydrogen peroxide oxidizes two Fe(2+) ions, which prevents hydroxyl radical production by the Fenton reaction (By similarity). It binds and incorporates Fe(2+) iron. Is responsible for hydrogen peroxide resistance. Does not bind DNA (By similarity).</text>
</comment>
<comment type="catalytic activity">
    <reaction>
        <text>2 Fe(2+) + H2O2 + 2 H(+) = 2 Fe(3+) + 2 H2O</text>
        <dbReference type="Rhea" id="RHEA:48712"/>
        <dbReference type="ChEBI" id="CHEBI:15377"/>
        <dbReference type="ChEBI" id="CHEBI:15378"/>
        <dbReference type="ChEBI" id="CHEBI:16240"/>
        <dbReference type="ChEBI" id="CHEBI:29033"/>
        <dbReference type="ChEBI" id="CHEBI:29034"/>
    </reaction>
</comment>
<comment type="subunit">
    <text evidence="1">Homododecamer. The 12 subunits form a hollow sphere into which the mineral iron core can probably be deposited. Can store up to 480 Fe(3+) (By similarity).</text>
</comment>
<comment type="subcellular location">
    <subcellularLocation>
        <location evidence="1">Cytoplasm</location>
    </subcellularLocation>
</comment>
<comment type="domain">
    <text evidence="1">12 di-nuclear ferroxidase centers are located at the interfaces between subunits related by 2-fold symmetry axes.</text>
</comment>
<comment type="similarity">
    <text evidence="2">Belongs to the Dps family.</text>
</comment>
<protein>
    <recommendedName>
        <fullName>DNA protection during starvation protein</fullName>
        <ecNumber>1.16.-.-</ecNumber>
    </recommendedName>
</protein>
<sequence>MMKQKYYQSPAEIASFSPRPSLADSKAVLNQAVADLSVAHSILHQVHWYMRGRGFMIWHPKMDEYMEEIDGYLDEMSERLITLGGAPFSTLKEFSENSQLKEVLGDYNVTIEEQLARVVEVFRYLAALFQKGFDVSDEEGDSVTNDIFNVAKASIEKHIWMLQAELGQAPKL</sequence>
<dbReference type="EC" id="1.16.-.-"/>
<dbReference type="EMBL" id="AJ833012">
    <property type="protein sequence ID" value="CAH55673.1"/>
    <property type="molecule type" value="Genomic_DNA"/>
</dbReference>
<dbReference type="EMBL" id="AM946016">
    <property type="protein sequence ID" value="CAR47134.1"/>
    <property type="molecule type" value="Genomic_DNA"/>
</dbReference>
<dbReference type="RefSeq" id="WP_012027605.1">
    <property type="nucleotide sequence ID" value="NC_012925.1"/>
</dbReference>
<dbReference type="SMR" id="C5VZF1"/>
<dbReference type="KEGG" id="ssi:SSU1500"/>
<dbReference type="HOGENOM" id="CLU_098183_4_0_9"/>
<dbReference type="GO" id="GO:0005737">
    <property type="term" value="C:cytoplasm"/>
    <property type="evidence" value="ECO:0007669"/>
    <property type="project" value="UniProtKB-SubCell"/>
</dbReference>
<dbReference type="GO" id="GO:0008199">
    <property type="term" value="F:ferric iron binding"/>
    <property type="evidence" value="ECO:0007669"/>
    <property type="project" value="InterPro"/>
</dbReference>
<dbReference type="GO" id="GO:0016491">
    <property type="term" value="F:oxidoreductase activity"/>
    <property type="evidence" value="ECO:0007669"/>
    <property type="project" value="UniProtKB-KW"/>
</dbReference>
<dbReference type="GO" id="GO:0006879">
    <property type="term" value="P:intracellular iron ion homeostasis"/>
    <property type="evidence" value="ECO:0007669"/>
    <property type="project" value="UniProtKB-KW"/>
</dbReference>
<dbReference type="CDD" id="cd01043">
    <property type="entry name" value="DPS"/>
    <property type="match status" value="1"/>
</dbReference>
<dbReference type="Gene3D" id="1.20.1260.10">
    <property type="match status" value="1"/>
</dbReference>
<dbReference type="InterPro" id="IPR002177">
    <property type="entry name" value="DPS_DNA-bd"/>
</dbReference>
<dbReference type="InterPro" id="IPR012347">
    <property type="entry name" value="Ferritin-like"/>
</dbReference>
<dbReference type="InterPro" id="IPR009078">
    <property type="entry name" value="Ferritin-like_SF"/>
</dbReference>
<dbReference type="InterPro" id="IPR008331">
    <property type="entry name" value="Ferritin_DPS_dom"/>
</dbReference>
<dbReference type="PANTHER" id="PTHR42932">
    <property type="entry name" value="GENERAL STRESS PROTEIN 20U"/>
    <property type="match status" value="1"/>
</dbReference>
<dbReference type="PANTHER" id="PTHR42932:SF1">
    <property type="entry name" value="GENERAL STRESS PROTEIN 20U"/>
    <property type="match status" value="1"/>
</dbReference>
<dbReference type="Pfam" id="PF00210">
    <property type="entry name" value="Ferritin"/>
    <property type="match status" value="1"/>
</dbReference>
<dbReference type="PIRSF" id="PIRSF005900">
    <property type="entry name" value="Dps"/>
    <property type="match status" value="1"/>
</dbReference>
<dbReference type="PRINTS" id="PR01346">
    <property type="entry name" value="HELNAPAPROT"/>
</dbReference>
<dbReference type="SUPFAM" id="SSF47240">
    <property type="entry name" value="Ferritin-like"/>
    <property type="match status" value="1"/>
</dbReference>